<accession>Q3MFA5</accession>
<reference key="1">
    <citation type="journal article" date="2014" name="Stand. Genomic Sci.">
        <title>Complete genome sequence of Anabaena variabilis ATCC 29413.</title>
        <authorList>
            <person name="Thiel T."/>
            <person name="Pratte B.S."/>
            <person name="Zhong J."/>
            <person name="Goodwin L."/>
            <person name="Copeland A."/>
            <person name="Lucas S."/>
            <person name="Han C."/>
            <person name="Pitluck S."/>
            <person name="Land M.L."/>
            <person name="Kyrpides N.C."/>
            <person name="Woyke T."/>
        </authorList>
    </citation>
    <scope>NUCLEOTIDE SEQUENCE [LARGE SCALE GENOMIC DNA]</scope>
    <source>
        <strain>ATCC 29413 / PCC 7937</strain>
    </source>
</reference>
<name>RS5_TRIV2</name>
<comment type="function">
    <text evidence="1">With S4 and S12 plays an important role in translational accuracy.</text>
</comment>
<comment type="function">
    <text evidence="1">Located at the back of the 30S subunit body where it stabilizes the conformation of the head with respect to the body.</text>
</comment>
<comment type="subunit">
    <text evidence="1">Part of the 30S ribosomal subunit. Contacts proteins S4 and S8.</text>
</comment>
<comment type="domain">
    <text>The N-terminal domain interacts with the head of the 30S subunit; the C-terminal domain interacts with the body and contacts protein S4. The interaction surface between S4 and S5 is involved in control of translational fidelity.</text>
</comment>
<comment type="similarity">
    <text evidence="1">Belongs to the universal ribosomal protein uS5 family.</text>
</comment>
<protein>
    <recommendedName>
        <fullName evidence="1">Small ribosomal subunit protein uS5</fullName>
    </recommendedName>
    <alternativeName>
        <fullName evidence="2">30S ribosomal protein S5</fullName>
    </alternativeName>
</protein>
<keyword id="KW-0687">Ribonucleoprotein</keyword>
<keyword id="KW-0689">Ribosomal protein</keyword>
<keyword id="KW-0694">RNA-binding</keyword>
<keyword id="KW-0699">rRNA-binding</keyword>
<organism>
    <name type="scientific">Trichormus variabilis (strain ATCC 29413 / PCC 7937)</name>
    <name type="common">Anabaena variabilis</name>
    <dbReference type="NCBI Taxonomy" id="240292"/>
    <lineage>
        <taxon>Bacteria</taxon>
        <taxon>Bacillati</taxon>
        <taxon>Cyanobacteriota</taxon>
        <taxon>Cyanophyceae</taxon>
        <taxon>Nostocales</taxon>
        <taxon>Nostocaceae</taxon>
        <taxon>Trichormus</taxon>
    </lineage>
</organism>
<sequence length="174" mass="18256">MATGRRKANRTKKEETNWQERVIQIRRVSKVVKGGKKLSFRAIVVVGNERGQVGVGVGKASDVIGAVKKGVADGKKHLIDIPITKSNSIPHPIDGVGGGAKVMMRPAAPGTGVIAGGAVRTVLELAGVRNVLAKQLGSNNPLNNARAAVNALSTLRTLAEVAEDRGIAIEKLYI</sequence>
<evidence type="ECO:0000255" key="1">
    <source>
        <dbReference type="HAMAP-Rule" id="MF_01307"/>
    </source>
</evidence>
<evidence type="ECO:0000305" key="2"/>
<proteinExistence type="inferred from homology"/>
<feature type="chain" id="PRO_0000230331" description="Small ribosomal subunit protein uS5">
    <location>
        <begin position="1"/>
        <end position="174"/>
    </location>
</feature>
<feature type="domain" description="S5 DRBM" evidence="1">
    <location>
        <begin position="18"/>
        <end position="81"/>
    </location>
</feature>
<gene>
    <name evidence="1" type="primary">rpsE</name>
    <name evidence="1" type="synonym">rps5</name>
    <name type="ordered locus">Ava_0707</name>
</gene>
<dbReference type="EMBL" id="CP000117">
    <property type="protein sequence ID" value="ABA20331.1"/>
    <property type="molecule type" value="Genomic_DNA"/>
</dbReference>
<dbReference type="RefSeq" id="WP_010998337.1">
    <property type="nucleotide sequence ID" value="NC_007413.1"/>
</dbReference>
<dbReference type="SMR" id="Q3MFA5"/>
<dbReference type="STRING" id="240292.Ava_0707"/>
<dbReference type="GeneID" id="58723365"/>
<dbReference type="KEGG" id="ava:Ava_0707"/>
<dbReference type="eggNOG" id="COG0098">
    <property type="taxonomic scope" value="Bacteria"/>
</dbReference>
<dbReference type="HOGENOM" id="CLU_065898_2_2_3"/>
<dbReference type="Proteomes" id="UP000002533">
    <property type="component" value="Chromosome"/>
</dbReference>
<dbReference type="GO" id="GO:0015935">
    <property type="term" value="C:small ribosomal subunit"/>
    <property type="evidence" value="ECO:0007669"/>
    <property type="project" value="InterPro"/>
</dbReference>
<dbReference type="GO" id="GO:0019843">
    <property type="term" value="F:rRNA binding"/>
    <property type="evidence" value="ECO:0007669"/>
    <property type="project" value="UniProtKB-UniRule"/>
</dbReference>
<dbReference type="GO" id="GO:0003735">
    <property type="term" value="F:structural constituent of ribosome"/>
    <property type="evidence" value="ECO:0007669"/>
    <property type="project" value="InterPro"/>
</dbReference>
<dbReference type="GO" id="GO:0006412">
    <property type="term" value="P:translation"/>
    <property type="evidence" value="ECO:0007669"/>
    <property type="project" value="UniProtKB-UniRule"/>
</dbReference>
<dbReference type="FunFam" id="3.30.160.20:FF:000001">
    <property type="entry name" value="30S ribosomal protein S5"/>
    <property type="match status" value="1"/>
</dbReference>
<dbReference type="FunFam" id="3.30.230.10:FF:000002">
    <property type="entry name" value="30S ribosomal protein S5"/>
    <property type="match status" value="1"/>
</dbReference>
<dbReference type="Gene3D" id="3.30.160.20">
    <property type="match status" value="1"/>
</dbReference>
<dbReference type="Gene3D" id="3.30.230.10">
    <property type="match status" value="1"/>
</dbReference>
<dbReference type="HAMAP" id="MF_01307_B">
    <property type="entry name" value="Ribosomal_uS5_B"/>
    <property type="match status" value="1"/>
</dbReference>
<dbReference type="InterPro" id="IPR020568">
    <property type="entry name" value="Ribosomal_Su5_D2-typ_SF"/>
</dbReference>
<dbReference type="InterPro" id="IPR000851">
    <property type="entry name" value="Ribosomal_uS5"/>
</dbReference>
<dbReference type="InterPro" id="IPR005712">
    <property type="entry name" value="Ribosomal_uS5_bac-type"/>
</dbReference>
<dbReference type="InterPro" id="IPR005324">
    <property type="entry name" value="Ribosomal_uS5_C"/>
</dbReference>
<dbReference type="InterPro" id="IPR013810">
    <property type="entry name" value="Ribosomal_uS5_N"/>
</dbReference>
<dbReference type="InterPro" id="IPR018192">
    <property type="entry name" value="Ribosomal_uS5_N_CS"/>
</dbReference>
<dbReference type="InterPro" id="IPR014721">
    <property type="entry name" value="Ribsml_uS5_D2-typ_fold_subgr"/>
</dbReference>
<dbReference type="NCBIfam" id="TIGR01021">
    <property type="entry name" value="rpsE_bact"/>
    <property type="match status" value="1"/>
</dbReference>
<dbReference type="PANTHER" id="PTHR48277">
    <property type="entry name" value="MITOCHONDRIAL RIBOSOMAL PROTEIN S5"/>
    <property type="match status" value="1"/>
</dbReference>
<dbReference type="PANTHER" id="PTHR48277:SF1">
    <property type="entry name" value="MITOCHONDRIAL RIBOSOMAL PROTEIN S5"/>
    <property type="match status" value="1"/>
</dbReference>
<dbReference type="Pfam" id="PF00333">
    <property type="entry name" value="Ribosomal_S5"/>
    <property type="match status" value="1"/>
</dbReference>
<dbReference type="Pfam" id="PF03719">
    <property type="entry name" value="Ribosomal_S5_C"/>
    <property type="match status" value="1"/>
</dbReference>
<dbReference type="SUPFAM" id="SSF54768">
    <property type="entry name" value="dsRNA-binding domain-like"/>
    <property type="match status" value="1"/>
</dbReference>
<dbReference type="SUPFAM" id="SSF54211">
    <property type="entry name" value="Ribosomal protein S5 domain 2-like"/>
    <property type="match status" value="1"/>
</dbReference>
<dbReference type="PROSITE" id="PS00585">
    <property type="entry name" value="RIBOSOMAL_S5"/>
    <property type="match status" value="1"/>
</dbReference>
<dbReference type="PROSITE" id="PS50881">
    <property type="entry name" value="S5_DSRBD"/>
    <property type="match status" value="1"/>
</dbReference>